<reference key="1">
    <citation type="journal article" date="2002" name="Nucleic Acids Res.">
        <title>Genome sequence of Shigella flexneri 2a: insights into pathogenicity through comparison with genomes of Escherichia coli K12 and O157.</title>
        <authorList>
            <person name="Jin Q."/>
            <person name="Yuan Z."/>
            <person name="Xu J."/>
            <person name="Wang Y."/>
            <person name="Shen Y."/>
            <person name="Lu W."/>
            <person name="Wang J."/>
            <person name="Liu H."/>
            <person name="Yang J."/>
            <person name="Yang F."/>
            <person name="Zhang X."/>
            <person name="Zhang J."/>
            <person name="Yang G."/>
            <person name="Wu H."/>
            <person name="Qu D."/>
            <person name="Dong J."/>
            <person name="Sun L."/>
            <person name="Xue Y."/>
            <person name="Zhao A."/>
            <person name="Gao Y."/>
            <person name="Zhu J."/>
            <person name="Kan B."/>
            <person name="Ding K."/>
            <person name="Chen S."/>
            <person name="Cheng H."/>
            <person name="Yao Z."/>
            <person name="He B."/>
            <person name="Chen R."/>
            <person name="Ma D."/>
            <person name="Qiang B."/>
            <person name="Wen Y."/>
            <person name="Hou Y."/>
            <person name="Yu J."/>
        </authorList>
    </citation>
    <scope>NUCLEOTIDE SEQUENCE [LARGE SCALE GENOMIC DNA]</scope>
    <source>
        <strain>301 / Serotype 2a</strain>
    </source>
</reference>
<reference key="2">
    <citation type="journal article" date="2003" name="Infect. Immun.">
        <title>Complete genome sequence and comparative genomics of Shigella flexneri serotype 2a strain 2457T.</title>
        <authorList>
            <person name="Wei J."/>
            <person name="Goldberg M.B."/>
            <person name="Burland V."/>
            <person name="Venkatesan M.M."/>
            <person name="Deng W."/>
            <person name="Fournier G."/>
            <person name="Mayhew G.F."/>
            <person name="Plunkett G. III"/>
            <person name="Rose D.J."/>
            <person name="Darling A."/>
            <person name="Mau B."/>
            <person name="Perna N.T."/>
            <person name="Payne S.M."/>
            <person name="Runyen-Janecky L.J."/>
            <person name="Zhou S."/>
            <person name="Schwartz D.C."/>
            <person name="Blattner F.R."/>
        </authorList>
    </citation>
    <scope>NUCLEOTIDE SEQUENCE [LARGE SCALE GENOMIC DNA]</scope>
    <source>
        <strain>ATCC 700930 / 2457T / Serotype 2a</strain>
    </source>
</reference>
<protein>
    <recommendedName>
        <fullName evidence="1">Nitric oxide reductase FlRd-NAD(+) reductase</fullName>
        <ecNumber evidence="1">1.18.1.-</ecNumber>
    </recommendedName>
    <alternativeName>
        <fullName evidence="1">Flavorubredoxin reductase</fullName>
        <shortName evidence="1">FlRd-reductase</shortName>
        <shortName evidence="1">FlavoRb reductase</shortName>
    </alternativeName>
</protein>
<feature type="chain" id="PRO_0000167668" description="Nitric oxide reductase FlRd-NAD(+) reductase">
    <location>
        <begin position="1"/>
        <end position="377"/>
    </location>
</feature>
<proteinExistence type="inferred from homology"/>
<dbReference type="EC" id="1.18.1.-" evidence="1"/>
<dbReference type="EMBL" id="AE005674">
    <property type="protein sequence ID" value="AAN44225.1"/>
    <property type="molecule type" value="Genomic_DNA"/>
</dbReference>
<dbReference type="EMBL" id="AE014073">
    <property type="protein sequence ID" value="AAP18051.1"/>
    <property type="molecule type" value="Genomic_DNA"/>
</dbReference>
<dbReference type="RefSeq" id="WP_000064736.1">
    <property type="nucleotide sequence ID" value="NZ_WPGW01000014.1"/>
</dbReference>
<dbReference type="SMR" id="P59403"/>
<dbReference type="STRING" id="198214.SF2734"/>
<dbReference type="PaxDb" id="198214-SF2734"/>
<dbReference type="KEGG" id="sfl:SF2734"/>
<dbReference type="KEGG" id="sfx:S2925"/>
<dbReference type="PATRIC" id="fig|198214.7.peg.3255"/>
<dbReference type="HOGENOM" id="CLU_003291_4_4_6"/>
<dbReference type="UniPathway" id="UPA00638"/>
<dbReference type="Proteomes" id="UP000001006">
    <property type="component" value="Chromosome"/>
</dbReference>
<dbReference type="Proteomes" id="UP000002673">
    <property type="component" value="Chromosome"/>
</dbReference>
<dbReference type="GO" id="GO:0005737">
    <property type="term" value="C:cytoplasm"/>
    <property type="evidence" value="ECO:0007669"/>
    <property type="project" value="UniProtKB-SubCell"/>
</dbReference>
<dbReference type="GO" id="GO:0016731">
    <property type="term" value="F:oxidoreductase activity, acting on iron-sulfur proteins as donors, NAD or NADP as acceptor"/>
    <property type="evidence" value="ECO:0007669"/>
    <property type="project" value="UniProtKB-UniRule"/>
</dbReference>
<dbReference type="FunFam" id="3.30.390.120:FF:000001">
    <property type="entry name" value="Nitric oxide reductase FlRd-NAD(+) reductase"/>
    <property type="match status" value="1"/>
</dbReference>
<dbReference type="FunFam" id="3.50.50.60:FF:000075">
    <property type="entry name" value="Nitric oxide reductase FlRd-NAD(+) reductase"/>
    <property type="match status" value="1"/>
</dbReference>
<dbReference type="Gene3D" id="3.30.390.120">
    <property type="match status" value="1"/>
</dbReference>
<dbReference type="Gene3D" id="3.50.50.60">
    <property type="entry name" value="FAD/NAD(P)-binding domain"/>
    <property type="match status" value="2"/>
</dbReference>
<dbReference type="HAMAP" id="MF_01313">
    <property type="entry name" value="NorW"/>
    <property type="match status" value="1"/>
</dbReference>
<dbReference type="InterPro" id="IPR050260">
    <property type="entry name" value="FAD-bd_OxRdtase"/>
</dbReference>
<dbReference type="InterPro" id="IPR036188">
    <property type="entry name" value="FAD/NAD-bd_sf"/>
</dbReference>
<dbReference type="InterPro" id="IPR023753">
    <property type="entry name" value="FAD/NAD-binding_dom"/>
</dbReference>
<dbReference type="InterPro" id="IPR023961">
    <property type="entry name" value="NO_rdtase_NorW"/>
</dbReference>
<dbReference type="InterPro" id="IPR041364">
    <property type="entry name" value="Rbx-bd"/>
</dbReference>
<dbReference type="NCBIfam" id="NF003437">
    <property type="entry name" value="PRK04965.1"/>
    <property type="match status" value="1"/>
</dbReference>
<dbReference type="PANTHER" id="PTHR43429:SF3">
    <property type="entry name" value="NITRITE REDUCTASE [NAD(P)H]"/>
    <property type="match status" value="1"/>
</dbReference>
<dbReference type="PANTHER" id="PTHR43429">
    <property type="entry name" value="PYRIDINE NUCLEOTIDE-DISULFIDE OXIDOREDUCTASE DOMAIN-CONTAINING"/>
    <property type="match status" value="1"/>
</dbReference>
<dbReference type="Pfam" id="PF07992">
    <property type="entry name" value="Pyr_redox_2"/>
    <property type="match status" value="1"/>
</dbReference>
<dbReference type="Pfam" id="PF18113">
    <property type="entry name" value="Rbx_binding"/>
    <property type="match status" value="1"/>
</dbReference>
<dbReference type="PRINTS" id="PR00368">
    <property type="entry name" value="FADPNR"/>
</dbReference>
<dbReference type="PRINTS" id="PR00411">
    <property type="entry name" value="PNDRDTASEI"/>
</dbReference>
<dbReference type="SUPFAM" id="SSF51905">
    <property type="entry name" value="FAD/NAD(P)-binding domain"/>
    <property type="match status" value="1"/>
</dbReference>
<gene>
    <name evidence="1" type="primary">norW</name>
    <name evidence="1" type="synonym">flrR</name>
    <name type="ordered locus">SF2734</name>
    <name type="ordered locus">S2925</name>
</gene>
<evidence type="ECO:0000255" key="1">
    <source>
        <dbReference type="HAMAP-Rule" id="MF_01313"/>
    </source>
</evidence>
<comment type="function">
    <text evidence="1">One of at least two accessory proteins for anaerobic nitric oxide (NO) reductase. Reduces the rubredoxin moiety of NO reductase.</text>
</comment>
<comment type="catalytic activity">
    <reaction evidence="1">
        <text>2 reduced [nitric oxide reductase rubredoxin domain] + NAD(+) + H(+) = 2 oxidized [nitric oxide reductase rubredoxin domain] + NADH</text>
        <dbReference type="Rhea" id="RHEA:42960"/>
        <dbReference type="Rhea" id="RHEA-COMP:10304"/>
        <dbReference type="Rhea" id="RHEA-COMP:10305"/>
        <dbReference type="ChEBI" id="CHEBI:15378"/>
        <dbReference type="ChEBI" id="CHEBI:29033"/>
        <dbReference type="ChEBI" id="CHEBI:29034"/>
        <dbReference type="ChEBI" id="CHEBI:57540"/>
        <dbReference type="ChEBI" id="CHEBI:57945"/>
    </reaction>
</comment>
<comment type="cofactor">
    <cofactor evidence="1">
        <name>FAD</name>
        <dbReference type="ChEBI" id="CHEBI:57692"/>
    </cofactor>
</comment>
<comment type="pathway">
    <text evidence="1">Nitrogen metabolism; nitric oxide reduction.</text>
</comment>
<comment type="subcellular location">
    <subcellularLocation>
        <location evidence="1">Cytoplasm</location>
    </subcellularLocation>
</comment>
<comment type="similarity">
    <text evidence="1">Belongs to the FAD-dependent oxidoreductase family.</text>
</comment>
<organism>
    <name type="scientific">Shigella flexneri</name>
    <dbReference type="NCBI Taxonomy" id="623"/>
    <lineage>
        <taxon>Bacteria</taxon>
        <taxon>Pseudomonadati</taxon>
        <taxon>Pseudomonadota</taxon>
        <taxon>Gammaproteobacteria</taxon>
        <taxon>Enterobacterales</taxon>
        <taxon>Enterobacteriaceae</taxon>
        <taxon>Shigella</taxon>
    </lineage>
</organism>
<sequence length="377" mass="41227">MSNGIVIIGSGFAARQLVKNIRKQDATIPLTLIAADSIDEYNKPDLSHVISQGQRADDLTRQTAGEFAGQFNLRLFPHTWVTDIDAEAHVVKSQNNQWQYDKLVLATGASAFVPPVPGRELMLTLNSQQEYRACETQLRDARRVLIVGGGLIGSELAMDFCRAGKAVTLIDNAASILASLMPPEVSSRLQHRLTEMGVHLLLKSQLQGLEKTDSGILATLDHQRSIEVDAVIAATGLRPETALARRAGLTINRGVCVDSYLQTSNADIYALGDCAEINGQVLPFLQPIQLSGMVLAKNLLGNNTPLKLPAMLVKIKTPELPLHLAGETQRQDLRWQINTERQGMVARGVDDADQLRAFVVSEDRMKEAFVLLKTLPV</sequence>
<keyword id="KW-0963">Cytoplasm</keyword>
<keyword id="KW-0274">FAD</keyword>
<keyword id="KW-0285">Flavoprotein</keyword>
<keyword id="KW-0520">NAD</keyword>
<keyword id="KW-0560">Oxidoreductase</keyword>
<keyword id="KW-1185">Reference proteome</keyword>
<accession>P59403</accession>
<name>NORW_SHIFL</name>